<sequence>MQKQEKIIEMFNQIAPTYDKANRILSFGADVAWRKKACQRVMSLYLKKDLKIADIACGTGDMIEIWQESALKMEKNILNIKGIDPSSGMLNVAKEKFPNVEFIEAGAQNLPLESQSLDILSISYGIRNVVERQKALSEFARVLQKDGILVVLEFTKREKGGFIAACRDFYLKNILPSIGGIISKNKSAYEYLPNSIEGFLSKEEFILELKNAGFEILDYKSFSFGVSSMFIAKKL</sequence>
<evidence type="ECO:0000255" key="1">
    <source>
        <dbReference type="HAMAP-Rule" id="MF_01813"/>
    </source>
</evidence>
<accession>Q5HWE7</accession>
<protein>
    <recommendedName>
        <fullName evidence="1">Ubiquinone/menaquinone biosynthesis C-methyltransferase UbiE</fullName>
        <ecNumber evidence="1">2.1.1.163</ecNumber>
        <ecNumber evidence="1">2.1.1.201</ecNumber>
    </recommendedName>
    <alternativeName>
        <fullName evidence="1">2-methoxy-6-polyprenyl-1,4-benzoquinol methylase</fullName>
    </alternativeName>
    <alternativeName>
        <fullName evidence="1">Demethylmenaquinone methyltransferase</fullName>
    </alternativeName>
</protein>
<feature type="chain" id="PRO_1000056239" description="Ubiquinone/menaquinone biosynthesis C-methyltransferase UbiE">
    <location>
        <begin position="1"/>
        <end position="235"/>
    </location>
</feature>
<feature type="binding site" evidence="1">
    <location>
        <position position="59"/>
    </location>
    <ligand>
        <name>S-adenosyl-L-methionine</name>
        <dbReference type="ChEBI" id="CHEBI:59789"/>
    </ligand>
</feature>
<feature type="binding site" evidence="1">
    <location>
        <position position="84"/>
    </location>
    <ligand>
        <name>S-adenosyl-L-methionine</name>
        <dbReference type="ChEBI" id="CHEBI:59789"/>
    </ligand>
</feature>
<feature type="binding site" evidence="1">
    <location>
        <position position="123"/>
    </location>
    <ligand>
        <name>S-adenosyl-L-methionine</name>
        <dbReference type="ChEBI" id="CHEBI:59789"/>
    </ligand>
</feature>
<keyword id="KW-0474">Menaquinone biosynthesis</keyword>
<keyword id="KW-0489">Methyltransferase</keyword>
<keyword id="KW-0949">S-adenosyl-L-methionine</keyword>
<keyword id="KW-0808">Transferase</keyword>
<keyword id="KW-0831">Ubiquinone biosynthesis</keyword>
<organism>
    <name type="scientific">Campylobacter jejuni (strain RM1221)</name>
    <dbReference type="NCBI Taxonomy" id="195099"/>
    <lineage>
        <taxon>Bacteria</taxon>
        <taxon>Pseudomonadati</taxon>
        <taxon>Campylobacterota</taxon>
        <taxon>Epsilonproteobacteria</taxon>
        <taxon>Campylobacterales</taxon>
        <taxon>Campylobacteraceae</taxon>
        <taxon>Campylobacter</taxon>
    </lineage>
</organism>
<name>UBIE_CAMJR</name>
<gene>
    <name evidence="1" type="primary">ubiE</name>
    <name type="ordered locus">CJE0369</name>
</gene>
<proteinExistence type="inferred from homology"/>
<reference key="1">
    <citation type="journal article" date="2005" name="PLoS Biol.">
        <title>Major structural differences and novel potential virulence mechanisms from the genomes of multiple Campylobacter species.</title>
        <authorList>
            <person name="Fouts D.E."/>
            <person name="Mongodin E.F."/>
            <person name="Mandrell R.E."/>
            <person name="Miller W.G."/>
            <person name="Rasko D.A."/>
            <person name="Ravel J."/>
            <person name="Brinkac L.M."/>
            <person name="DeBoy R.T."/>
            <person name="Parker C.T."/>
            <person name="Daugherty S.C."/>
            <person name="Dodson R.J."/>
            <person name="Durkin A.S."/>
            <person name="Madupu R."/>
            <person name="Sullivan S.A."/>
            <person name="Shetty J.U."/>
            <person name="Ayodeji M.A."/>
            <person name="Shvartsbeyn A."/>
            <person name="Schatz M.C."/>
            <person name="Badger J.H."/>
            <person name="Fraser C.M."/>
            <person name="Nelson K.E."/>
        </authorList>
    </citation>
    <scope>NUCLEOTIDE SEQUENCE [LARGE SCALE GENOMIC DNA]</scope>
    <source>
        <strain>RM1221</strain>
    </source>
</reference>
<dbReference type="EC" id="2.1.1.163" evidence="1"/>
<dbReference type="EC" id="2.1.1.201" evidence="1"/>
<dbReference type="EMBL" id="CP000025">
    <property type="protein sequence ID" value="AAW34958.1"/>
    <property type="molecule type" value="Genomic_DNA"/>
</dbReference>
<dbReference type="RefSeq" id="WP_002859428.1">
    <property type="nucleotide sequence ID" value="NC_003912.7"/>
</dbReference>
<dbReference type="SMR" id="Q5HWE7"/>
<dbReference type="KEGG" id="cjr:CJE0369"/>
<dbReference type="HOGENOM" id="CLU_037990_0_0_7"/>
<dbReference type="UniPathway" id="UPA00079">
    <property type="reaction ID" value="UER00169"/>
</dbReference>
<dbReference type="UniPathway" id="UPA00232"/>
<dbReference type="GO" id="GO:0008425">
    <property type="term" value="F:2-methoxy-6-polyprenyl-1,4-benzoquinol methyltransferase activity"/>
    <property type="evidence" value="ECO:0007669"/>
    <property type="project" value="UniProtKB-EC"/>
</dbReference>
<dbReference type="GO" id="GO:0043770">
    <property type="term" value="F:demethylmenaquinone methyltransferase activity"/>
    <property type="evidence" value="ECO:0007669"/>
    <property type="project" value="UniProtKB-UniRule"/>
</dbReference>
<dbReference type="GO" id="GO:0009234">
    <property type="term" value="P:menaquinone biosynthetic process"/>
    <property type="evidence" value="ECO:0007669"/>
    <property type="project" value="UniProtKB-UniRule"/>
</dbReference>
<dbReference type="GO" id="GO:0032259">
    <property type="term" value="P:methylation"/>
    <property type="evidence" value="ECO:0007669"/>
    <property type="project" value="UniProtKB-KW"/>
</dbReference>
<dbReference type="CDD" id="cd02440">
    <property type="entry name" value="AdoMet_MTases"/>
    <property type="match status" value="1"/>
</dbReference>
<dbReference type="Gene3D" id="3.40.50.150">
    <property type="entry name" value="Vaccinia Virus protein VP39"/>
    <property type="match status" value="1"/>
</dbReference>
<dbReference type="HAMAP" id="MF_01813">
    <property type="entry name" value="MenG_UbiE_methyltr"/>
    <property type="match status" value="1"/>
</dbReference>
<dbReference type="InterPro" id="IPR029063">
    <property type="entry name" value="SAM-dependent_MTases_sf"/>
</dbReference>
<dbReference type="InterPro" id="IPR004033">
    <property type="entry name" value="UbiE/COQ5_MeTrFase"/>
</dbReference>
<dbReference type="InterPro" id="IPR023576">
    <property type="entry name" value="UbiE/COQ5_MeTrFase_CS"/>
</dbReference>
<dbReference type="NCBIfam" id="TIGR01934">
    <property type="entry name" value="MenG_MenH_UbiE"/>
    <property type="match status" value="1"/>
</dbReference>
<dbReference type="NCBIfam" id="NF001244">
    <property type="entry name" value="PRK00216.1-5"/>
    <property type="match status" value="1"/>
</dbReference>
<dbReference type="PANTHER" id="PTHR43591:SF24">
    <property type="entry name" value="2-METHOXY-6-POLYPRENYL-1,4-BENZOQUINOL METHYLASE, MITOCHONDRIAL"/>
    <property type="match status" value="1"/>
</dbReference>
<dbReference type="PANTHER" id="PTHR43591">
    <property type="entry name" value="METHYLTRANSFERASE"/>
    <property type="match status" value="1"/>
</dbReference>
<dbReference type="Pfam" id="PF01209">
    <property type="entry name" value="Ubie_methyltran"/>
    <property type="match status" value="1"/>
</dbReference>
<dbReference type="SUPFAM" id="SSF53335">
    <property type="entry name" value="S-adenosyl-L-methionine-dependent methyltransferases"/>
    <property type="match status" value="1"/>
</dbReference>
<dbReference type="PROSITE" id="PS51608">
    <property type="entry name" value="SAM_MT_UBIE"/>
    <property type="match status" value="1"/>
</dbReference>
<dbReference type="PROSITE" id="PS01183">
    <property type="entry name" value="UBIE_1"/>
    <property type="match status" value="1"/>
</dbReference>
<dbReference type="PROSITE" id="PS01184">
    <property type="entry name" value="UBIE_2"/>
    <property type="match status" value="1"/>
</dbReference>
<comment type="function">
    <text evidence="1">Methyltransferase required for the conversion of demethylmenaquinol (DMKH2) to menaquinol (MKH2) and the conversion of 2-polyprenyl-6-methoxy-1,4-benzoquinol (DDMQH2) to 2-polyprenyl-3-methyl-6-methoxy-1,4-benzoquinol (DMQH2).</text>
</comment>
<comment type="catalytic activity">
    <reaction evidence="1">
        <text>a 2-demethylmenaquinol + S-adenosyl-L-methionine = a menaquinol + S-adenosyl-L-homocysteine + H(+)</text>
        <dbReference type="Rhea" id="RHEA:42640"/>
        <dbReference type="Rhea" id="RHEA-COMP:9539"/>
        <dbReference type="Rhea" id="RHEA-COMP:9563"/>
        <dbReference type="ChEBI" id="CHEBI:15378"/>
        <dbReference type="ChEBI" id="CHEBI:18151"/>
        <dbReference type="ChEBI" id="CHEBI:55437"/>
        <dbReference type="ChEBI" id="CHEBI:57856"/>
        <dbReference type="ChEBI" id="CHEBI:59789"/>
        <dbReference type="EC" id="2.1.1.163"/>
    </reaction>
</comment>
<comment type="catalytic activity">
    <reaction evidence="1">
        <text>a 2-methoxy-6-(all-trans-polyprenyl)benzene-1,4-diol + S-adenosyl-L-methionine = a 5-methoxy-2-methyl-3-(all-trans-polyprenyl)benzene-1,4-diol + S-adenosyl-L-homocysteine + H(+)</text>
        <dbReference type="Rhea" id="RHEA:28286"/>
        <dbReference type="Rhea" id="RHEA-COMP:10858"/>
        <dbReference type="Rhea" id="RHEA-COMP:10859"/>
        <dbReference type="ChEBI" id="CHEBI:15378"/>
        <dbReference type="ChEBI" id="CHEBI:57856"/>
        <dbReference type="ChEBI" id="CHEBI:59789"/>
        <dbReference type="ChEBI" id="CHEBI:84166"/>
        <dbReference type="ChEBI" id="CHEBI:84167"/>
        <dbReference type="EC" id="2.1.1.201"/>
    </reaction>
</comment>
<comment type="pathway">
    <text evidence="1">Quinol/quinone metabolism; menaquinone biosynthesis; menaquinol from 1,4-dihydroxy-2-naphthoate: step 2/2.</text>
</comment>
<comment type="pathway">
    <text evidence="1">Cofactor biosynthesis; ubiquinone biosynthesis.</text>
</comment>
<comment type="similarity">
    <text evidence="1">Belongs to the class I-like SAM-binding methyltransferase superfamily. MenG/UbiE family.</text>
</comment>